<evidence type="ECO:0000255" key="1">
    <source>
        <dbReference type="HAMAP-Rule" id="MF_00385"/>
    </source>
</evidence>
<evidence type="ECO:0000305" key="2"/>
<sequence length="82" mass="9082">MVVIRMARGGAKKRPFYRIVVADKRSPRDGRFIEKLGFFNPLAKGGEERLKLDVAKAEAWLAKGAQPSDRVASLIKEAKKAA</sequence>
<name>RS16_FRATN</name>
<organism>
    <name type="scientific">Francisella tularensis subsp. novicida (strain U112)</name>
    <dbReference type="NCBI Taxonomy" id="401614"/>
    <lineage>
        <taxon>Bacteria</taxon>
        <taxon>Pseudomonadati</taxon>
        <taxon>Pseudomonadota</taxon>
        <taxon>Gammaproteobacteria</taxon>
        <taxon>Thiotrichales</taxon>
        <taxon>Francisellaceae</taxon>
        <taxon>Francisella</taxon>
    </lineage>
</organism>
<keyword id="KW-0687">Ribonucleoprotein</keyword>
<keyword id="KW-0689">Ribosomal protein</keyword>
<reference key="1">
    <citation type="journal article" date="2007" name="Genome Biol.">
        <title>Comparison of Francisella tularensis genomes reveals evolutionary events associated with the emergence of human pathogenic strains.</title>
        <authorList>
            <person name="Rohmer L."/>
            <person name="Fong C."/>
            <person name="Abmayr S."/>
            <person name="Wasnick M."/>
            <person name="Larson Freeman T.J."/>
            <person name="Radey M."/>
            <person name="Guina T."/>
            <person name="Svensson K."/>
            <person name="Hayden H.S."/>
            <person name="Jacobs M."/>
            <person name="Gallagher L.A."/>
            <person name="Manoil C."/>
            <person name="Ernst R.K."/>
            <person name="Drees B."/>
            <person name="Buckley D."/>
            <person name="Haugen E."/>
            <person name="Bovee D."/>
            <person name="Zhou Y."/>
            <person name="Chang J."/>
            <person name="Levy R."/>
            <person name="Lim R."/>
            <person name="Gillett W."/>
            <person name="Guenthener D."/>
            <person name="Kang A."/>
            <person name="Shaffer S.A."/>
            <person name="Taylor G."/>
            <person name="Chen J."/>
            <person name="Gallis B."/>
            <person name="D'Argenio D.A."/>
            <person name="Forsman M."/>
            <person name="Olson M.V."/>
            <person name="Goodlett D.R."/>
            <person name="Kaul R."/>
            <person name="Miller S.I."/>
            <person name="Brittnacher M.J."/>
        </authorList>
    </citation>
    <scope>NUCLEOTIDE SEQUENCE [LARGE SCALE GENOMIC DNA]</scope>
    <source>
        <strain>U112</strain>
    </source>
</reference>
<protein>
    <recommendedName>
        <fullName evidence="1">Small ribosomal subunit protein bS16</fullName>
    </recommendedName>
    <alternativeName>
        <fullName evidence="2">30S ribosomal protein S16</fullName>
    </alternativeName>
</protein>
<gene>
    <name evidence="1" type="primary">rpsP</name>
    <name type="ordered locus">FTN_1562</name>
</gene>
<feature type="chain" id="PRO_1000049259" description="Small ribosomal subunit protein bS16">
    <location>
        <begin position="1"/>
        <end position="82"/>
    </location>
</feature>
<accession>A0Q861</accession>
<dbReference type="EMBL" id="CP000439">
    <property type="protein sequence ID" value="ABK90426.1"/>
    <property type="molecule type" value="Genomic_DNA"/>
</dbReference>
<dbReference type="RefSeq" id="WP_003023081.1">
    <property type="nucleotide sequence ID" value="NZ_CP009633.1"/>
</dbReference>
<dbReference type="SMR" id="A0Q861"/>
<dbReference type="KEGG" id="ftn:FTN_1562"/>
<dbReference type="KEGG" id="ftx:AW25_436"/>
<dbReference type="BioCyc" id="FTUL401614:G1G75-1614-MONOMER"/>
<dbReference type="Proteomes" id="UP000000762">
    <property type="component" value="Chromosome"/>
</dbReference>
<dbReference type="GO" id="GO:0005737">
    <property type="term" value="C:cytoplasm"/>
    <property type="evidence" value="ECO:0007669"/>
    <property type="project" value="UniProtKB-ARBA"/>
</dbReference>
<dbReference type="GO" id="GO:0015935">
    <property type="term" value="C:small ribosomal subunit"/>
    <property type="evidence" value="ECO:0007669"/>
    <property type="project" value="TreeGrafter"/>
</dbReference>
<dbReference type="GO" id="GO:0003735">
    <property type="term" value="F:structural constituent of ribosome"/>
    <property type="evidence" value="ECO:0007669"/>
    <property type="project" value="InterPro"/>
</dbReference>
<dbReference type="GO" id="GO:0006412">
    <property type="term" value="P:translation"/>
    <property type="evidence" value="ECO:0007669"/>
    <property type="project" value="UniProtKB-UniRule"/>
</dbReference>
<dbReference type="Gene3D" id="3.30.1320.10">
    <property type="match status" value="1"/>
</dbReference>
<dbReference type="HAMAP" id="MF_00385">
    <property type="entry name" value="Ribosomal_bS16"/>
    <property type="match status" value="1"/>
</dbReference>
<dbReference type="InterPro" id="IPR000307">
    <property type="entry name" value="Ribosomal_bS16"/>
</dbReference>
<dbReference type="InterPro" id="IPR023803">
    <property type="entry name" value="Ribosomal_bS16_dom_sf"/>
</dbReference>
<dbReference type="NCBIfam" id="TIGR00002">
    <property type="entry name" value="S16"/>
    <property type="match status" value="1"/>
</dbReference>
<dbReference type="PANTHER" id="PTHR12919">
    <property type="entry name" value="30S RIBOSOMAL PROTEIN S16"/>
    <property type="match status" value="1"/>
</dbReference>
<dbReference type="PANTHER" id="PTHR12919:SF20">
    <property type="entry name" value="SMALL RIBOSOMAL SUBUNIT PROTEIN BS16M"/>
    <property type="match status" value="1"/>
</dbReference>
<dbReference type="Pfam" id="PF00886">
    <property type="entry name" value="Ribosomal_S16"/>
    <property type="match status" value="1"/>
</dbReference>
<dbReference type="SUPFAM" id="SSF54565">
    <property type="entry name" value="Ribosomal protein S16"/>
    <property type="match status" value="1"/>
</dbReference>
<comment type="similarity">
    <text evidence="1">Belongs to the bacterial ribosomal protein bS16 family.</text>
</comment>
<proteinExistence type="inferred from homology"/>